<reference key="1">
    <citation type="submission" date="2006-12" db="EMBL/GenBank/DDBJ databases">
        <title>Complete sequence of chromosome 1 of Paracoccus denitrificans PD1222.</title>
        <authorList>
            <person name="Copeland A."/>
            <person name="Lucas S."/>
            <person name="Lapidus A."/>
            <person name="Barry K."/>
            <person name="Detter J.C."/>
            <person name="Glavina del Rio T."/>
            <person name="Hammon N."/>
            <person name="Israni S."/>
            <person name="Dalin E."/>
            <person name="Tice H."/>
            <person name="Pitluck S."/>
            <person name="Munk A.C."/>
            <person name="Brettin T."/>
            <person name="Bruce D."/>
            <person name="Han C."/>
            <person name="Tapia R."/>
            <person name="Gilna P."/>
            <person name="Schmutz J."/>
            <person name="Larimer F."/>
            <person name="Land M."/>
            <person name="Hauser L."/>
            <person name="Kyrpides N."/>
            <person name="Lykidis A."/>
            <person name="Spiro S."/>
            <person name="Richardson D.J."/>
            <person name="Moir J.W.B."/>
            <person name="Ferguson S.J."/>
            <person name="van Spanning R.J.M."/>
            <person name="Richardson P."/>
        </authorList>
    </citation>
    <scope>NUCLEOTIDE SEQUENCE [LARGE SCALE GENOMIC DNA]</scope>
    <source>
        <strain>Pd 1222</strain>
    </source>
</reference>
<sequence length="238" mass="24524">MILYPAIDLKDGNCVRLLRGDMEAATVFGTDPAAQARAFRDAGAEWLHLVDLNGAFAGKPVNAAAVEAILAAIDLPVQLGGGIRDMATIEGWLDRGLARVILGTVAVEQPELVREAAMAFPGKIAVGIDARGGRVATRGWAEETDVNVVDLAHRFEDAGVAAIIYTDIDRDGAMAGPNIAATEALARAVNVPVIASGGVSSMQDLMALRATGVIAGAISGRALYDGAIDLNAALKALA</sequence>
<comment type="catalytic activity">
    <reaction evidence="1">
        <text>1-(5-phospho-beta-D-ribosyl)-5-[(5-phospho-beta-D-ribosylamino)methylideneamino]imidazole-4-carboxamide = 5-[(5-phospho-1-deoxy-D-ribulos-1-ylimino)methylamino]-1-(5-phospho-beta-D-ribosyl)imidazole-4-carboxamide</text>
        <dbReference type="Rhea" id="RHEA:15469"/>
        <dbReference type="ChEBI" id="CHEBI:58435"/>
        <dbReference type="ChEBI" id="CHEBI:58525"/>
        <dbReference type="EC" id="5.3.1.16"/>
    </reaction>
</comment>
<comment type="pathway">
    <text evidence="1">Amino-acid biosynthesis; L-histidine biosynthesis; L-histidine from 5-phospho-alpha-D-ribose 1-diphosphate: step 4/9.</text>
</comment>
<comment type="subcellular location">
    <subcellularLocation>
        <location evidence="1">Cytoplasm</location>
    </subcellularLocation>
</comment>
<comment type="similarity">
    <text evidence="1">Belongs to the HisA/HisF family.</text>
</comment>
<gene>
    <name evidence="1" type="primary">hisA</name>
    <name type="ordered locus">Pden_1886</name>
</gene>
<name>HIS4_PARDP</name>
<protein>
    <recommendedName>
        <fullName evidence="1">1-(5-phosphoribosyl)-5-[(5-phosphoribosylamino)methylideneamino] imidazole-4-carboxamide isomerase</fullName>
        <ecNumber evidence="1">5.3.1.16</ecNumber>
    </recommendedName>
    <alternativeName>
        <fullName evidence="1">Phosphoribosylformimino-5-aminoimidazole carboxamide ribotide isomerase</fullName>
    </alternativeName>
</protein>
<proteinExistence type="inferred from homology"/>
<dbReference type="EC" id="5.3.1.16" evidence="1"/>
<dbReference type="EMBL" id="CP000489">
    <property type="protein sequence ID" value="ABL69981.1"/>
    <property type="molecule type" value="Genomic_DNA"/>
</dbReference>
<dbReference type="RefSeq" id="WP_011748178.1">
    <property type="nucleotide sequence ID" value="NC_008686.1"/>
</dbReference>
<dbReference type="SMR" id="A1B387"/>
<dbReference type="STRING" id="318586.Pden_1886"/>
<dbReference type="EnsemblBacteria" id="ABL69981">
    <property type="protein sequence ID" value="ABL69981"/>
    <property type="gene ID" value="Pden_1886"/>
</dbReference>
<dbReference type="GeneID" id="93450284"/>
<dbReference type="KEGG" id="pde:Pden_1886"/>
<dbReference type="eggNOG" id="COG0106">
    <property type="taxonomic scope" value="Bacteria"/>
</dbReference>
<dbReference type="HOGENOM" id="CLU_048577_1_1_5"/>
<dbReference type="OrthoDB" id="9807749at2"/>
<dbReference type="UniPathway" id="UPA00031">
    <property type="reaction ID" value="UER00009"/>
</dbReference>
<dbReference type="Proteomes" id="UP000000361">
    <property type="component" value="Chromosome 1"/>
</dbReference>
<dbReference type="GO" id="GO:0005737">
    <property type="term" value="C:cytoplasm"/>
    <property type="evidence" value="ECO:0007669"/>
    <property type="project" value="UniProtKB-SubCell"/>
</dbReference>
<dbReference type="GO" id="GO:0003949">
    <property type="term" value="F:1-(5-phosphoribosyl)-5-[(5-phosphoribosylamino)methylideneamino]imidazole-4-carboxamide isomerase activity"/>
    <property type="evidence" value="ECO:0007669"/>
    <property type="project" value="UniProtKB-UniRule"/>
</dbReference>
<dbReference type="GO" id="GO:0000105">
    <property type="term" value="P:L-histidine biosynthetic process"/>
    <property type="evidence" value="ECO:0007669"/>
    <property type="project" value="UniProtKB-UniRule"/>
</dbReference>
<dbReference type="GO" id="GO:0000162">
    <property type="term" value="P:L-tryptophan biosynthetic process"/>
    <property type="evidence" value="ECO:0007669"/>
    <property type="project" value="TreeGrafter"/>
</dbReference>
<dbReference type="CDD" id="cd04732">
    <property type="entry name" value="HisA"/>
    <property type="match status" value="1"/>
</dbReference>
<dbReference type="FunFam" id="3.20.20.70:FF:000009">
    <property type="entry name" value="1-(5-phosphoribosyl)-5-[(5-phosphoribosylamino)methylideneamino] imidazole-4-carboxamide isomerase"/>
    <property type="match status" value="1"/>
</dbReference>
<dbReference type="Gene3D" id="3.20.20.70">
    <property type="entry name" value="Aldolase class I"/>
    <property type="match status" value="1"/>
</dbReference>
<dbReference type="HAMAP" id="MF_01014">
    <property type="entry name" value="HisA"/>
    <property type="match status" value="1"/>
</dbReference>
<dbReference type="InterPro" id="IPR013785">
    <property type="entry name" value="Aldolase_TIM"/>
</dbReference>
<dbReference type="InterPro" id="IPR006062">
    <property type="entry name" value="His_biosynth"/>
</dbReference>
<dbReference type="InterPro" id="IPR006063">
    <property type="entry name" value="HisA_bact_arch"/>
</dbReference>
<dbReference type="InterPro" id="IPR044524">
    <property type="entry name" value="Isoase_HisA-like"/>
</dbReference>
<dbReference type="InterPro" id="IPR023016">
    <property type="entry name" value="Isoase_HisA-like_bact"/>
</dbReference>
<dbReference type="InterPro" id="IPR011060">
    <property type="entry name" value="RibuloseP-bd_barrel"/>
</dbReference>
<dbReference type="NCBIfam" id="TIGR00007">
    <property type="entry name" value="1-(5-phosphoribosyl)-5-[(5-phosphoribosylamino)methylideneamino]imidazole-4-carboxamide isomerase"/>
    <property type="match status" value="1"/>
</dbReference>
<dbReference type="NCBIfam" id="NF010112">
    <property type="entry name" value="PRK13585.1"/>
    <property type="match status" value="1"/>
</dbReference>
<dbReference type="PANTHER" id="PTHR43090">
    <property type="entry name" value="1-(5-PHOSPHORIBOSYL)-5-[(5-PHOSPHORIBOSYLAMINO)METHYLIDENEAMINO] IMIDAZOLE-4-CARBOXAMIDE ISOMERASE"/>
    <property type="match status" value="1"/>
</dbReference>
<dbReference type="PANTHER" id="PTHR43090:SF2">
    <property type="entry name" value="1-(5-PHOSPHORIBOSYL)-5-[(5-PHOSPHORIBOSYLAMINO)METHYLIDENEAMINO] IMIDAZOLE-4-CARBOXAMIDE ISOMERASE"/>
    <property type="match status" value="1"/>
</dbReference>
<dbReference type="Pfam" id="PF00977">
    <property type="entry name" value="His_biosynth"/>
    <property type="match status" value="1"/>
</dbReference>
<dbReference type="SUPFAM" id="SSF51366">
    <property type="entry name" value="Ribulose-phoshate binding barrel"/>
    <property type="match status" value="1"/>
</dbReference>
<organism>
    <name type="scientific">Paracoccus denitrificans (strain Pd 1222)</name>
    <dbReference type="NCBI Taxonomy" id="318586"/>
    <lineage>
        <taxon>Bacteria</taxon>
        <taxon>Pseudomonadati</taxon>
        <taxon>Pseudomonadota</taxon>
        <taxon>Alphaproteobacteria</taxon>
        <taxon>Rhodobacterales</taxon>
        <taxon>Paracoccaceae</taxon>
        <taxon>Paracoccus</taxon>
    </lineage>
</organism>
<evidence type="ECO:0000255" key="1">
    <source>
        <dbReference type="HAMAP-Rule" id="MF_01014"/>
    </source>
</evidence>
<feature type="chain" id="PRO_0000290503" description="1-(5-phosphoribosyl)-5-[(5-phosphoribosylamino)methylideneamino] imidazole-4-carboxamide isomerase">
    <location>
        <begin position="1"/>
        <end position="238"/>
    </location>
</feature>
<feature type="active site" description="Proton acceptor" evidence="1">
    <location>
        <position position="8"/>
    </location>
</feature>
<feature type="active site" description="Proton donor" evidence="1">
    <location>
        <position position="129"/>
    </location>
</feature>
<keyword id="KW-0028">Amino-acid biosynthesis</keyword>
<keyword id="KW-0963">Cytoplasm</keyword>
<keyword id="KW-0368">Histidine biosynthesis</keyword>
<keyword id="KW-0413">Isomerase</keyword>
<keyword id="KW-1185">Reference proteome</keyword>
<accession>A1B387</accession>